<comment type="function">
    <text evidence="1">Forms an efflux pump with AaeA. Could function as a metabolic relief valve, allowing to eliminate certain compounds when they accumulate to high levels in the cell.</text>
</comment>
<comment type="subcellular location">
    <subcellularLocation>
        <location evidence="1">Cell inner membrane</location>
        <topology evidence="1">Multi-pass membrane protein</topology>
    </subcellularLocation>
</comment>
<comment type="similarity">
    <text evidence="1">Belongs to the aromatic acid exporter ArAE (TC 2.A.85) family.</text>
</comment>
<evidence type="ECO:0000255" key="1">
    <source>
        <dbReference type="HAMAP-Rule" id="MF_01545"/>
    </source>
</evidence>
<name>AAEB_SALPB</name>
<organism>
    <name type="scientific">Salmonella paratyphi B (strain ATCC BAA-1250 / SPB7)</name>
    <dbReference type="NCBI Taxonomy" id="1016998"/>
    <lineage>
        <taxon>Bacteria</taxon>
        <taxon>Pseudomonadati</taxon>
        <taxon>Pseudomonadota</taxon>
        <taxon>Gammaproteobacteria</taxon>
        <taxon>Enterobacterales</taxon>
        <taxon>Enterobacteriaceae</taxon>
        <taxon>Salmonella</taxon>
    </lineage>
</organism>
<gene>
    <name evidence="1" type="primary">aaeB</name>
    <name type="ordered locus">SPAB_04192</name>
</gene>
<dbReference type="EMBL" id="CP000886">
    <property type="protein sequence ID" value="ABX69515.1"/>
    <property type="molecule type" value="Genomic_DNA"/>
</dbReference>
<dbReference type="RefSeq" id="WP_000510913.1">
    <property type="nucleotide sequence ID" value="NC_010102.1"/>
</dbReference>
<dbReference type="SMR" id="A9N862"/>
<dbReference type="KEGG" id="spq:SPAB_04192"/>
<dbReference type="PATRIC" id="fig|1016998.12.peg.3947"/>
<dbReference type="HOGENOM" id="CLU_027647_0_0_6"/>
<dbReference type="BioCyc" id="SENT1016998:SPAB_RS17045-MONOMER"/>
<dbReference type="Proteomes" id="UP000008556">
    <property type="component" value="Chromosome"/>
</dbReference>
<dbReference type="GO" id="GO:0005886">
    <property type="term" value="C:plasma membrane"/>
    <property type="evidence" value="ECO:0007669"/>
    <property type="project" value="UniProtKB-SubCell"/>
</dbReference>
<dbReference type="GO" id="GO:0022857">
    <property type="term" value="F:transmembrane transporter activity"/>
    <property type="evidence" value="ECO:0007669"/>
    <property type="project" value="UniProtKB-UniRule"/>
</dbReference>
<dbReference type="GO" id="GO:0046942">
    <property type="term" value="P:carboxylic acid transport"/>
    <property type="evidence" value="ECO:0007669"/>
    <property type="project" value="InterPro"/>
</dbReference>
<dbReference type="HAMAP" id="MF_01545">
    <property type="entry name" value="AaeB"/>
    <property type="match status" value="1"/>
</dbReference>
<dbReference type="InterPro" id="IPR006726">
    <property type="entry name" value="PHBA_efflux_AaeB/fusaric-R"/>
</dbReference>
<dbReference type="InterPro" id="IPR023706">
    <property type="entry name" value="PHBA_efflux_pump_AaeB"/>
</dbReference>
<dbReference type="NCBIfam" id="NF007916">
    <property type="entry name" value="PRK10631.1"/>
    <property type="match status" value="1"/>
</dbReference>
<dbReference type="PANTHER" id="PTHR30509:SF9">
    <property type="entry name" value="MULTIDRUG RESISTANCE PROTEIN MDTO"/>
    <property type="match status" value="1"/>
</dbReference>
<dbReference type="PANTHER" id="PTHR30509">
    <property type="entry name" value="P-HYDROXYBENZOIC ACID EFFLUX PUMP SUBUNIT-RELATED"/>
    <property type="match status" value="1"/>
</dbReference>
<dbReference type="Pfam" id="PF04632">
    <property type="entry name" value="FUSC"/>
    <property type="match status" value="1"/>
</dbReference>
<reference key="1">
    <citation type="submission" date="2007-11" db="EMBL/GenBank/DDBJ databases">
        <authorList>
            <consortium name="The Salmonella enterica serovar Paratyphi B Genome Sequencing Project"/>
            <person name="McClelland M."/>
            <person name="Sanderson E.K."/>
            <person name="Porwollik S."/>
            <person name="Spieth J."/>
            <person name="Clifton W.S."/>
            <person name="Fulton R."/>
            <person name="Cordes M."/>
            <person name="Wollam A."/>
            <person name="Shah N."/>
            <person name="Pepin K."/>
            <person name="Bhonagiri V."/>
            <person name="Nash W."/>
            <person name="Johnson M."/>
            <person name="Thiruvilangam P."/>
            <person name="Wilson R."/>
        </authorList>
    </citation>
    <scope>NUCLEOTIDE SEQUENCE [LARGE SCALE GENOMIC DNA]</scope>
    <source>
        <strain>ATCC BAA-1250 / SPB7</strain>
    </source>
</reference>
<protein>
    <recommendedName>
        <fullName evidence="1">p-hydroxybenzoic acid efflux pump subunit AaeB</fullName>
        <shortName evidence="1">pHBA efflux pump protein B</shortName>
    </recommendedName>
</protein>
<keyword id="KW-0997">Cell inner membrane</keyword>
<keyword id="KW-1003">Cell membrane</keyword>
<keyword id="KW-0472">Membrane</keyword>
<keyword id="KW-0812">Transmembrane</keyword>
<keyword id="KW-1133">Transmembrane helix</keyword>
<keyword id="KW-0813">Transport</keyword>
<feature type="chain" id="PRO_1000087666" description="p-hydroxybenzoic acid efflux pump subunit AaeB">
    <location>
        <begin position="1"/>
        <end position="655"/>
    </location>
</feature>
<feature type="transmembrane region" description="Helical" evidence="1">
    <location>
        <begin position="13"/>
        <end position="33"/>
    </location>
</feature>
<feature type="transmembrane region" description="Helical" evidence="1">
    <location>
        <begin position="38"/>
        <end position="58"/>
    </location>
</feature>
<feature type="transmembrane region" description="Helical" evidence="1">
    <location>
        <begin position="69"/>
        <end position="89"/>
    </location>
</feature>
<feature type="transmembrane region" description="Helical" evidence="1">
    <location>
        <begin position="93"/>
        <end position="113"/>
    </location>
</feature>
<feature type="transmembrane region" description="Helical" evidence="1">
    <location>
        <begin position="121"/>
        <end position="141"/>
    </location>
</feature>
<feature type="transmembrane region" description="Helical" evidence="1">
    <location>
        <begin position="152"/>
        <end position="172"/>
    </location>
</feature>
<feature type="transmembrane region" description="Helical" evidence="1">
    <location>
        <begin position="370"/>
        <end position="390"/>
    </location>
</feature>
<feature type="transmembrane region" description="Helical" evidence="1">
    <location>
        <begin position="407"/>
        <end position="427"/>
    </location>
</feature>
<feature type="transmembrane region" description="Helical" evidence="1">
    <location>
        <begin position="431"/>
        <end position="451"/>
    </location>
</feature>
<feature type="transmembrane region" description="Helical" evidence="1">
    <location>
        <begin position="459"/>
        <end position="479"/>
    </location>
</feature>
<feature type="transmembrane region" description="Helical" evidence="1">
    <location>
        <begin position="482"/>
        <end position="502"/>
    </location>
</feature>
<sequence length="655" mass="73646">MGIFSIANQHIRFAVKLACAIVLALFIGFHFQLETPRWAVLTAAIVAAGPAFAAGGEPYSGAIRYRGMLRIIGTFIGCIAALIIIISMIRAPLLMILVCCVWAGFCTWISSLVRIENSYAWGLSGYTALIIVITIQTEPLLTPQFALERCSEIVIGIGCAILADLLFSPRSIKQEVDRELDSLLVAQYQLMQLCIKHGDSEEVDNAWGDLVRRTAALEGMRSNLNMESSRWVRANRRLKALNTLSLTLITQSCETYLIQNTRPELITDTFRELFETPVETVQDVHRQLKRMRRVIVWTGERETPVTLYSWVGAATRYLLLKRGVISNTKISATEEEILQGEPVVKVESAERHHAMVNFWRTTLSCILGTLFWLWTGWTSGNGAMVMIAVVTSLAMRLPNPRMVCIDFIYGTLAALPLGLLYFLVIIPNTQQSMLLLCLSLAVLGFFIGIEVQKRRLGSMGALASTINIIVLDNPMTFHFSQFLDSALGQIVGCMLAFIVILLVRDKSKDRTGRVLLNQFVSAAVSAMTTNVVRRKENRLPALYQQLFLLMNKFPGDLPKFRLALTMIIAHQRLRDAPIPVNEDLSVFHRQLRRTADHVISAGSDDKRRRYFGQLLDELDIYQEKLRIWEAPPQVTEPVKRLTGMLHKYQNALTDS</sequence>
<proteinExistence type="inferred from homology"/>
<accession>A9N862</accession>